<accession>Q00963</accession>
<accession>Q6NNX2</accession>
<accession>Q9VX30</accession>
<keyword id="KW-0002">3D-structure</keyword>
<keyword id="KW-0117">Actin capping</keyword>
<keyword id="KW-0009">Actin-binding</keyword>
<keyword id="KW-0112">Calmodulin-binding</keyword>
<keyword id="KW-0963">Cytoplasm</keyword>
<keyword id="KW-0206">Cytoskeleton</keyword>
<keyword id="KW-0597">Phosphoprotein</keyword>
<keyword id="KW-1185">Reference proteome</keyword>
<keyword id="KW-0677">Repeat</keyword>
<protein>
    <recommendedName>
        <fullName>Spectrin beta chain</fullName>
    </recommendedName>
</protein>
<comment type="function">
    <text evidence="6">Spectrin is the major constituent of the cytoskeletal network underlying the erythrocyte plasma membrane. It associates with band 4.1 and actin to form the cytoskeletal superstructure of the erythrocyte plasma membrane. Interacts with calmodulin in a calcium-dependent manner.</text>
</comment>
<comment type="subunit">
    <text>Native spectrin molecule is a tetramer composed of two antiparallel heterodimers joined head to head so that each end of the native molecule includes the C-terminus of the alpha subunit and the N-terminus of the beta subunit.</text>
</comment>
<comment type="subcellular location">
    <subcellularLocation>
        <location>Cytoplasm</location>
        <location>Cytoskeleton</location>
    </subcellularLocation>
    <subcellularLocation>
        <location>Cytoplasm</location>
        <location>Cell cortex</location>
    </subcellularLocation>
</comment>
<comment type="similarity">
    <text evidence="7">Belongs to the spectrin family.</text>
</comment>
<comment type="sequence caution" evidence="7">
    <conflict type="miscellaneous discrepancy">
        <sequence resource="EMBL-CDS" id="AAR82828"/>
    </conflict>
    <text>Contaminating sequence. Potential poly-A sequence.</text>
</comment>
<evidence type="ECO:0000255" key="1"/>
<evidence type="ECO:0000255" key="2">
    <source>
        <dbReference type="PROSITE-ProRule" id="PRU00044"/>
    </source>
</evidence>
<evidence type="ECO:0000255" key="3">
    <source>
        <dbReference type="PROSITE-ProRule" id="PRU00145"/>
    </source>
</evidence>
<evidence type="ECO:0000256" key="4">
    <source>
        <dbReference type="SAM" id="MobiDB-lite"/>
    </source>
</evidence>
<evidence type="ECO:0000269" key="5">
    <source>
    </source>
</evidence>
<evidence type="ECO:0000269" key="6">
    <source>
    </source>
</evidence>
<evidence type="ECO:0000305" key="7"/>
<evidence type="ECO:0007829" key="8">
    <source>
        <dbReference type="PDB" id="1DRO"/>
    </source>
</evidence>
<organism>
    <name type="scientific">Drosophila melanogaster</name>
    <name type="common">Fruit fly</name>
    <dbReference type="NCBI Taxonomy" id="7227"/>
    <lineage>
        <taxon>Eukaryota</taxon>
        <taxon>Metazoa</taxon>
        <taxon>Ecdysozoa</taxon>
        <taxon>Arthropoda</taxon>
        <taxon>Hexapoda</taxon>
        <taxon>Insecta</taxon>
        <taxon>Pterygota</taxon>
        <taxon>Neoptera</taxon>
        <taxon>Endopterygota</taxon>
        <taxon>Diptera</taxon>
        <taxon>Brachycera</taxon>
        <taxon>Muscomorpha</taxon>
        <taxon>Ephydroidea</taxon>
        <taxon>Drosophilidae</taxon>
        <taxon>Drosophila</taxon>
        <taxon>Sophophora</taxon>
    </lineage>
</organism>
<name>SPTCB_DROME</name>
<gene>
    <name type="primary">beta-Spec</name>
    <name type="synonym">Spec-b</name>
    <name type="ORF">CG5870</name>
</gene>
<sequence>MTTDISIVRWDPSQGPGNEYIDEYEYDGGNSSSRLFERSRIKALAEERESVQKKTFTKWVNSHLCRVNCRIADLYVDMRDGKHLIKLLEVLSGERLPKPTKGKMRIHCLENVDKALQFLREQRVHLENIGSHDIVDGNASLNLGLIWTIILRFQIQDITIEEVDNKETKSAKDALLLWCQMKTAGYHNVNVRNFTTSWRDGLAFNAIIHKHRPDLVQFEKLSKTNAIHNLNNAFDVAEDKLGLAKLLDAEDVFVEHPDEKSIITYVVTYYHYFSKLKQETVQGKRIGKVVGIAMENDKMVHDYENFTSDLLKWIETTIQSLGEREFENSLAGVQGQLAQFSNYRTIEKPPKFVEKGNLEVLLFTLQSKMRANNQKPYTPKEGKMISDINKAWERLEKAEHERELALREELIRQEKLEQLAARFDRKASMRETWLSENQRLVSQDNFGFDLAAVEAAAKKHEAIETDIFAYEERVQAVVAVCDELESERYHDVKRILLRKDNVMRLWTYLLELLRARRMRLEISLQLQQNFQEMLYILDNMEEIKQLLMTDDYGKHLMGVEDLLQKHSLVEADINILGERVKVVVQNSQKFLSDDPESYKPCDPEIIVSRVQQLEDAYAELVRLAVERRSRLEESRKLWQFYWDTADEENWIKEKEQIVSTDEVGHDLTTVNLMLSKHKALESEITSHDPQLQNVAKVGSELITEGHFGADRIKDRLKEILNKWDHLLDLTKYRRQRLENAVEYFQLFADADDVDNWMLDTLRIVSSEDVGRDEANVQSLLKKHKDVADELKNYAEVIDALHKQAESLKLNEAEKANVDKRLEAIDNRYKELTELAKLRKQRLLDALSLYKLMSEADGVEQWIKEKTKMLDTMTPGKDIEDVEIMKHRFEGFDKEMNANASRVAVVNQLARQLLHVEHPNSDEILERQNHLNQEWSTLREKAEAKMDDLKSAHGVQTFYIECRETISWIEDKKRILTETDSLEMDLTGVMTLQRRLSGMDRDLAAIQAKLSSLEREANSIEDEHPEEAKIIRERIAQIELIWEQLTQMLKERDSKLEEAGDLHRFLRDLDHFQTWLTKTQTDVASEDTPTSLPEAEKLLNQHQSIREEIDNYTEDYKNMMEYGERLTSEGSTSDDPQYMFLRERLNALKDGWEELHQMWENRQVLLSQSLDQQLFNRDARQTEVLLSQQEHFLSKDDTPVNLEQAENQLKRHEAFLTTMEANDDKINTLLQVADTLVEKDHFDADKIGKRAENITGRRDDNRQRALDQHEKLKNQVKLHEFLQDLEELAEWVQEKYATSQDESYRSAKTIHSKWTRHQAFEAEIAANKERLFEAEKSAQELSKEKPEFKDVIEPKLKELAKQFDDLEVHTKEKGAMLFDANREVLVQQTCDDIDSYITDLEKQIVSGDTANDLTSVNILMQKQQVIQTQMAVKARQVEEIDKQTEYLQKTVPEEKIEPIVVKKTAVLERFEKIKAPLLERQKALEKKKEAFQFCRDVEDEKLWIDEKLPVANSPDYGNSLFNVHVLKKKNQSLATEIDNHEPRINAICNNGRKLIDEGHEDAKKFEALISDLTQKWQELKDAIENRRKHLLESEKVQQYFFDAQEAESWMSEQELYMMVEDRGKDEISAQNLMKKHENLEQSVEDYANTIRQLGEVARQFSGDDISSGDAVAVKQSQLDKLYAGLKDLAGERRARLNEALQLFMLSREVDDLEQWITDREVVAGSQELGQDFDHVTLLSERFNEFARDTEAVGGERVAKVNGIADNLIQAGHSDSATIAEWKDNLNESWQDLLELIETRTQMLAASRELHKFFHDCKDVLGRILEKQHGVSDELGRDAGSVSTLQRKHYNFLQDLITLYSQVQQIQEESAKLQDAYAGDKAKEITNREQEVLHAWDNLQAMCDARKQKLADTGDLFRFFNMVRILMIWMEDLVRQMNTSEKPRDVSGVELLMNNHQSLKAEIDTREDNFGACISLGKELLTRNHYASADIKDRLMTLSNSRNALLRRWEERWENLQLILEVYQFARDAAVAEAWLIAQEPYLLSSELGHTIDEVENLIKKHEAFEKSAAAQEERFSALERLTTFELKEMKRRQELAEEAERQRIKEEQEAKAASEAAEQAKREAERRDDVDVGASHDDSERGGTPGAGEGHEGYVTRKHEWDSTTKKASNRSWDKVYMAAKAGRISFYKDQKGYKSNPELTFRGEPSYDLQNAAIEIASDYTKKKHVLRVKLANGALFLLQAHDDTEMSQWVTSLKAQSDSTAVAASRSQTLPATSQKDEPKRRSFFTLKKK</sequence>
<dbReference type="EMBL" id="M92288">
    <property type="protein sequence ID" value="AAA28399.1"/>
    <property type="molecule type" value="mRNA"/>
</dbReference>
<dbReference type="EMBL" id="AE014298">
    <property type="protein sequence ID" value="AAF48751.1"/>
    <property type="molecule type" value="Genomic_DNA"/>
</dbReference>
<dbReference type="EMBL" id="BT011160">
    <property type="protein sequence ID" value="AAR82828.1"/>
    <property type="status" value="ALT_SEQ"/>
    <property type="molecule type" value="mRNA"/>
</dbReference>
<dbReference type="PIR" id="A46147">
    <property type="entry name" value="A46147"/>
</dbReference>
<dbReference type="RefSeq" id="NP_523388.1">
    <property type="nucleotide sequence ID" value="NM_078664.3"/>
</dbReference>
<dbReference type="PDB" id="1DRO">
    <property type="method" value="NMR"/>
    <property type="chains" value="A=2142-2262"/>
</dbReference>
<dbReference type="PDBsum" id="1DRO"/>
<dbReference type="SMR" id="Q00963"/>
<dbReference type="BioGRID" id="59071">
    <property type="interactions" value="17"/>
</dbReference>
<dbReference type="DIP" id="DIP-18565N"/>
<dbReference type="FunCoup" id="Q00963">
    <property type="interactions" value="269"/>
</dbReference>
<dbReference type="IntAct" id="Q00963">
    <property type="interactions" value="21"/>
</dbReference>
<dbReference type="STRING" id="7227.FBpp0306507"/>
<dbReference type="iPTMnet" id="Q00963"/>
<dbReference type="PaxDb" id="7227-FBpp0074228"/>
<dbReference type="EnsemblMetazoa" id="FBtr0074454">
    <property type="protein sequence ID" value="FBpp0074228"/>
    <property type="gene ID" value="FBgn0250788"/>
</dbReference>
<dbReference type="GeneID" id="32746"/>
<dbReference type="KEGG" id="dme:Dmel_CG5870"/>
<dbReference type="AGR" id="FB:FBgn0250788"/>
<dbReference type="CTD" id="32746"/>
<dbReference type="FlyBase" id="FBgn0250788">
    <property type="gene designation" value="beta-Spec"/>
</dbReference>
<dbReference type="VEuPathDB" id="VectorBase:FBgn0250788"/>
<dbReference type="eggNOG" id="KOG0517">
    <property type="taxonomic scope" value="Eukaryota"/>
</dbReference>
<dbReference type="InParanoid" id="Q00963"/>
<dbReference type="OrthoDB" id="5865767at2759"/>
<dbReference type="PhylomeDB" id="Q00963"/>
<dbReference type="Reactome" id="R-DME-375165">
    <property type="pathway name" value="NCAM signaling for neurite out-growth"/>
</dbReference>
<dbReference type="Reactome" id="R-DME-5673001">
    <property type="pathway name" value="RAF/MAP kinase cascade"/>
</dbReference>
<dbReference type="Reactome" id="R-DME-6807878">
    <property type="pathway name" value="COPI-mediated anterograde transport"/>
</dbReference>
<dbReference type="Reactome" id="R-DME-9013420">
    <property type="pathway name" value="RHOU GTPase cycle"/>
</dbReference>
<dbReference type="Reactome" id="R-DME-9013424">
    <property type="pathway name" value="RHOV GTPase cycle"/>
</dbReference>
<dbReference type="SignaLink" id="Q00963"/>
<dbReference type="BioGRID-ORCS" id="32746">
    <property type="hits" value="0 hits in 3 CRISPR screens"/>
</dbReference>
<dbReference type="ChiTaRS" id="beta-Spec">
    <property type="organism name" value="fly"/>
</dbReference>
<dbReference type="EvolutionaryTrace" id="Q00963"/>
<dbReference type="GenomeRNAi" id="32746"/>
<dbReference type="PRO" id="PR:Q00963"/>
<dbReference type="Proteomes" id="UP000000803">
    <property type="component" value="Chromosome X"/>
</dbReference>
<dbReference type="Bgee" id="FBgn0250788">
    <property type="expression patterns" value="Expressed in adult glial cell (Drosophila) in body wall and 283 other cell types or tissues"/>
</dbReference>
<dbReference type="ExpressionAtlas" id="Q00963">
    <property type="expression patterns" value="baseline and differential"/>
</dbReference>
<dbReference type="GO" id="GO:0030424">
    <property type="term" value="C:axon"/>
    <property type="evidence" value="ECO:0000314"/>
    <property type="project" value="FlyBase"/>
</dbReference>
<dbReference type="GO" id="GO:0030054">
    <property type="term" value="C:cell junction"/>
    <property type="evidence" value="ECO:0000318"/>
    <property type="project" value="GO_Central"/>
</dbReference>
<dbReference type="GO" id="GO:0042995">
    <property type="term" value="C:cell projection"/>
    <property type="evidence" value="ECO:0000318"/>
    <property type="project" value="GO_Central"/>
</dbReference>
<dbReference type="GO" id="GO:0030864">
    <property type="term" value="C:cortical actin cytoskeleton"/>
    <property type="evidence" value="ECO:0000318"/>
    <property type="project" value="GO_Central"/>
</dbReference>
<dbReference type="GO" id="GO:0045169">
    <property type="term" value="C:fusome"/>
    <property type="evidence" value="ECO:0000314"/>
    <property type="project" value="FlyBase"/>
</dbReference>
<dbReference type="GO" id="GO:0016328">
    <property type="term" value="C:lateral plasma membrane"/>
    <property type="evidence" value="ECO:0000314"/>
    <property type="project" value="FlyBase"/>
</dbReference>
<dbReference type="GO" id="GO:0031594">
    <property type="term" value="C:neuromuscular junction"/>
    <property type="evidence" value="ECO:0000314"/>
    <property type="project" value="FlyBase"/>
</dbReference>
<dbReference type="GO" id="GO:0005886">
    <property type="term" value="C:plasma membrane"/>
    <property type="evidence" value="ECO:0000314"/>
    <property type="project" value="FlyBase"/>
</dbReference>
<dbReference type="GO" id="GO:0008091">
    <property type="term" value="C:spectrin"/>
    <property type="evidence" value="ECO:0007669"/>
    <property type="project" value="InterPro"/>
</dbReference>
<dbReference type="GO" id="GO:0045170">
    <property type="term" value="C:spectrosome"/>
    <property type="evidence" value="ECO:0000314"/>
    <property type="project" value="FlyBase"/>
</dbReference>
<dbReference type="GO" id="GO:0051015">
    <property type="term" value="F:actin filament binding"/>
    <property type="evidence" value="ECO:0000318"/>
    <property type="project" value="GO_Central"/>
</dbReference>
<dbReference type="GO" id="GO:0030506">
    <property type="term" value="F:ankyrin binding"/>
    <property type="evidence" value="ECO:0000314"/>
    <property type="project" value="FlyBase"/>
</dbReference>
<dbReference type="GO" id="GO:0005516">
    <property type="term" value="F:calmodulin binding"/>
    <property type="evidence" value="ECO:0007669"/>
    <property type="project" value="UniProtKB-KW"/>
</dbReference>
<dbReference type="GO" id="GO:0008017">
    <property type="term" value="F:microtubule binding"/>
    <property type="evidence" value="ECO:0000314"/>
    <property type="project" value="FlyBase"/>
</dbReference>
<dbReference type="GO" id="GO:0005546">
    <property type="term" value="F:phosphatidylinositol-4,5-bisphosphate binding"/>
    <property type="evidence" value="ECO:0000314"/>
    <property type="project" value="FlyBase"/>
</dbReference>
<dbReference type="GO" id="GO:0005200">
    <property type="term" value="F:structural constituent of cytoskeleton"/>
    <property type="evidence" value="ECO:0007669"/>
    <property type="project" value="InterPro"/>
</dbReference>
<dbReference type="GO" id="GO:0030036">
    <property type="term" value="P:actin cytoskeleton organization"/>
    <property type="evidence" value="ECO:0000318"/>
    <property type="project" value="GO_Central"/>
</dbReference>
<dbReference type="GO" id="GO:0051693">
    <property type="term" value="P:actin filament capping"/>
    <property type="evidence" value="ECO:0007669"/>
    <property type="project" value="UniProtKB-KW"/>
</dbReference>
<dbReference type="GO" id="GO:0007411">
    <property type="term" value="P:axon guidance"/>
    <property type="evidence" value="ECO:0000315"/>
    <property type="project" value="FlyBase"/>
</dbReference>
<dbReference type="GO" id="GO:0016199">
    <property type="term" value="P:axon midline choice point recognition"/>
    <property type="evidence" value="ECO:0000315"/>
    <property type="project" value="FlyBase"/>
</dbReference>
<dbReference type="GO" id="GO:0007409">
    <property type="term" value="P:axonogenesis"/>
    <property type="evidence" value="ECO:0000315"/>
    <property type="project" value="FlyBase"/>
</dbReference>
<dbReference type="GO" id="GO:0042062">
    <property type="term" value="P:long-term strengthening of neuromuscular junction"/>
    <property type="evidence" value="ECO:0000315"/>
    <property type="project" value="FlyBase"/>
</dbReference>
<dbReference type="GO" id="GO:0048790">
    <property type="term" value="P:maintenance of presynaptic active zone structure"/>
    <property type="evidence" value="ECO:0000314"/>
    <property type="project" value="FlyBase"/>
</dbReference>
<dbReference type="GO" id="GO:0007026">
    <property type="term" value="P:negative regulation of microtubule depolymerization"/>
    <property type="evidence" value="ECO:0000315"/>
    <property type="project" value="FlyBase"/>
</dbReference>
<dbReference type="GO" id="GO:0007399">
    <property type="term" value="P:nervous system development"/>
    <property type="evidence" value="ECO:0000315"/>
    <property type="project" value="FlyBase"/>
</dbReference>
<dbReference type="GO" id="GO:0007274">
    <property type="term" value="P:neuromuscular synaptic transmission"/>
    <property type="evidence" value="ECO:0000315"/>
    <property type="project" value="FlyBase"/>
</dbReference>
<dbReference type="GO" id="GO:0048666">
    <property type="term" value="P:neuron development"/>
    <property type="evidence" value="ECO:0000318"/>
    <property type="project" value="GO_Central"/>
</dbReference>
<dbReference type="GO" id="GO:0072499">
    <property type="term" value="P:photoreceptor cell axon guidance"/>
    <property type="evidence" value="ECO:0000315"/>
    <property type="project" value="FlyBase"/>
</dbReference>
<dbReference type="GO" id="GO:1903729">
    <property type="term" value="P:regulation of plasma membrane organization"/>
    <property type="evidence" value="ECO:0000315"/>
    <property type="project" value="UniProtKB"/>
</dbReference>
<dbReference type="GO" id="GO:0050807">
    <property type="term" value="P:regulation of synapse organization"/>
    <property type="evidence" value="ECO:0000315"/>
    <property type="project" value="FlyBase"/>
</dbReference>
<dbReference type="CDD" id="cd21246">
    <property type="entry name" value="CH_SPTB-like_rpt1"/>
    <property type="match status" value="1"/>
</dbReference>
<dbReference type="CDD" id="cd21248">
    <property type="entry name" value="CH_SPTB_like_rpt2"/>
    <property type="match status" value="1"/>
</dbReference>
<dbReference type="CDD" id="cd10571">
    <property type="entry name" value="PH_beta_spectrin"/>
    <property type="match status" value="1"/>
</dbReference>
<dbReference type="CDD" id="cd00176">
    <property type="entry name" value="SPEC"/>
    <property type="match status" value="9"/>
</dbReference>
<dbReference type="FunFam" id="1.20.58.60:FF:000020">
    <property type="entry name" value="Spectrin alpha chain, non-erythrocytic 1"/>
    <property type="match status" value="2"/>
</dbReference>
<dbReference type="FunFam" id="1.10.418.10:FF:000003">
    <property type="entry name" value="Spectrin beta chain"/>
    <property type="match status" value="1"/>
</dbReference>
<dbReference type="FunFam" id="1.10.418.10:FF:000004">
    <property type="entry name" value="Spectrin beta chain"/>
    <property type="match status" value="1"/>
</dbReference>
<dbReference type="FunFam" id="1.20.58.60:FF:000011">
    <property type="entry name" value="Spectrin beta chain"/>
    <property type="match status" value="1"/>
</dbReference>
<dbReference type="FunFam" id="1.20.58.60:FF:000018">
    <property type="entry name" value="Spectrin beta chain"/>
    <property type="match status" value="1"/>
</dbReference>
<dbReference type="FunFam" id="1.20.58.60:FF:000019">
    <property type="entry name" value="Spectrin beta chain"/>
    <property type="match status" value="1"/>
</dbReference>
<dbReference type="FunFam" id="1.20.58.60:FF:000028">
    <property type="entry name" value="Spectrin beta chain"/>
    <property type="match status" value="1"/>
</dbReference>
<dbReference type="FunFam" id="1.20.58.60:FF:000033">
    <property type="entry name" value="Spectrin beta chain"/>
    <property type="match status" value="1"/>
</dbReference>
<dbReference type="FunFam" id="1.20.58.60:FF:000083">
    <property type="entry name" value="Spectrin beta chain"/>
    <property type="match status" value="1"/>
</dbReference>
<dbReference type="FunFam" id="1.20.58.60:FF:000229">
    <property type="entry name" value="Spectrin beta chain"/>
    <property type="match status" value="1"/>
</dbReference>
<dbReference type="FunFam" id="1.20.58.60:FF:000243">
    <property type="entry name" value="Spectrin beta chain"/>
    <property type="match status" value="1"/>
</dbReference>
<dbReference type="FunFam" id="1.20.58.60:FF:000299">
    <property type="entry name" value="Spectrin beta chain"/>
    <property type="match status" value="1"/>
</dbReference>
<dbReference type="FunFam" id="2.30.29.30:FF:000024">
    <property type="entry name" value="Spectrin beta chain"/>
    <property type="match status" value="1"/>
</dbReference>
<dbReference type="Gene3D" id="1.20.58.60">
    <property type="match status" value="12"/>
</dbReference>
<dbReference type="Gene3D" id="1.10.418.10">
    <property type="entry name" value="Calponin-like domain"/>
    <property type="match status" value="2"/>
</dbReference>
<dbReference type="Gene3D" id="2.30.29.30">
    <property type="entry name" value="Pleckstrin-homology domain (PH domain)/Phosphotyrosine-binding domain (PTB)"/>
    <property type="match status" value="1"/>
</dbReference>
<dbReference type="InterPro" id="IPR001589">
    <property type="entry name" value="Actinin_actin-bd_CS"/>
</dbReference>
<dbReference type="InterPro" id="IPR001715">
    <property type="entry name" value="CH_dom"/>
</dbReference>
<dbReference type="InterPro" id="IPR036872">
    <property type="entry name" value="CH_dom_sf"/>
</dbReference>
<dbReference type="InterPro" id="IPR011993">
    <property type="entry name" value="PH-like_dom_sf"/>
</dbReference>
<dbReference type="InterPro" id="IPR041681">
    <property type="entry name" value="PH_9"/>
</dbReference>
<dbReference type="InterPro" id="IPR001605">
    <property type="entry name" value="PH_dom-spectrin-type"/>
</dbReference>
<dbReference type="InterPro" id="IPR001849">
    <property type="entry name" value="PH_domain"/>
</dbReference>
<dbReference type="InterPro" id="IPR018159">
    <property type="entry name" value="Spectrin/alpha-actinin"/>
</dbReference>
<dbReference type="InterPro" id="IPR016343">
    <property type="entry name" value="Spectrin_bsu"/>
</dbReference>
<dbReference type="InterPro" id="IPR002017">
    <property type="entry name" value="Spectrin_repeat"/>
</dbReference>
<dbReference type="PANTHER" id="PTHR11915">
    <property type="entry name" value="SPECTRIN/FILAMIN RELATED CYTOSKELETAL PROTEIN"/>
    <property type="match status" value="1"/>
</dbReference>
<dbReference type="Pfam" id="PF00307">
    <property type="entry name" value="CH"/>
    <property type="match status" value="2"/>
</dbReference>
<dbReference type="Pfam" id="PF15410">
    <property type="entry name" value="PH_9"/>
    <property type="match status" value="1"/>
</dbReference>
<dbReference type="Pfam" id="PF00435">
    <property type="entry name" value="Spectrin"/>
    <property type="match status" value="17"/>
</dbReference>
<dbReference type="PIRSF" id="PIRSF002297">
    <property type="entry name" value="Spectrin_beta_subunit"/>
    <property type="match status" value="1"/>
</dbReference>
<dbReference type="PRINTS" id="PR00683">
    <property type="entry name" value="SPECTRINPH"/>
</dbReference>
<dbReference type="SMART" id="SM00033">
    <property type="entry name" value="CH"/>
    <property type="match status" value="2"/>
</dbReference>
<dbReference type="SMART" id="SM00233">
    <property type="entry name" value="PH"/>
    <property type="match status" value="1"/>
</dbReference>
<dbReference type="SMART" id="SM00150">
    <property type="entry name" value="SPEC"/>
    <property type="match status" value="17"/>
</dbReference>
<dbReference type="SUPFAM" id="SSF47576">
    <property type="entry name" value="Calponin-homology domain, CH-domain"/>
    <property type="match status" value="1"/>
</dbReference>
<dbReference type="SUPFAM" id="SSF50729">
    <property type="entry name" value="PH domain-like"/>
    <property type="match status" value="1"/>
</dbReference>
<dbReference type="SUPFAM" id="SSF46966">
    <property type="entry name" value="Spectrin repeat"/>
    <property type="match status" value="15"/>
</dbReference>
<dbReference type="PROSITE" id="PS00019">
    <property type="entry name" value="ACTININ_1"/>
    <property type="match status" value="1"/>
</dbReference>
<dbReference type="PROSITE" id="PS00020">
    <property type="entry name" value="ACTININ_2"/>
    <property type="match status" value="1"/>
</dbReference>
<dbReference type="PROSITE" id="PS50021">
    <property type="entry name" value="CH"/>
    <property type="match status" value="2"/>
</dbReference>
<dbReference type="PROSITE" id="PS50003">
    <property type="entry name" value="PH_DOMAIN"/>
    <property type="match status" value="1"/>
</dbReference>
<proteinExistence type="evidence at protein level"/>
<feature type="chain" id="PRO_0000073468" description="Spectrin beta chain">
    <location>
        <begin position="1"/>
        <end position="2291"/>
    </location>
</feature>
<feature type="domain" description="Calponin-homology (CH) 1" evidence="2">
    <location>
        <begin position="50"/>
        <end position="154"/>
    </location>
</feature>
<feature type="domain" description="Calponin-homology (CH) 2" evidence="2">
    <location>
        <begin position="169"/>
        <end position="274"/>
    </location>
</feature>
<feature type="repeat" description="Spectrin 1" evidence="1">
    <location>
        <begin position="300"/>
        <end position="408"/>
    </location>
</feature>
<feature type="repeat" description="Spectrin 2" evidence="1">
    <location>
        <begin position="420"/>
        <end position="521"/>
    </location>
</feature>
<feature type="repeat" description="Spectrin 3" evidence="1">
    <location>
        <begin position="525"/>
        <end position="633"/>
    </location>
</feature>
<feature type="repeat" description="Spectrin 4" evidence="1">
    <location>
        <begin position="636"/>
        <end position="739"/>
    </location>
</feature>
<feature type="repeat" description="Spectrin 5" evidence="1">
    <location>
        <begin position="743"/>
        <end position="843"/>
    </location>
</feature>
<feature type="repeat" description="Spectrin 6" evidence="1">
    <location>
        <begin position="848"/>
        <end position="948"/>
    </location>
</feature>
<feature type="repeat" description="Spectrin 7" evidence="1">
    <location>
        <begin position="954"/>
        <end position="1057"/>
    </location>
</feature>
<feature type="repeat" description="Spectrin 8" evidence="1">
    <location>
        <begin position="1060"/>
        <end position="1166"/>
    </location>
</feature>
<feature type="repeat" description="Spectrin 9" evidence="1">
    <location>
        <begin position="1170"/>
        <end position="1272"/>
    </location>
</feature>
<feature type="repeat" description="Spectrin 10" evidence="1">
    <location>
        <begin position="1276"/>
        <end position="1376"/>
    </location>
</feature>
<feature type="repeat" description="Spectrin 11" evidence="1">
    <location>
        <begin position="1386"/>
        <end position="1484"/>
    </location>
</feature>
<feature type="repeat" description="Spectrin 12" evidence="1">
    <location>
        <begin position="1488"/>
        <end position="1591"/>
    </location>
</feature>
<feature type="repeat" description="Spectrin 13" evidence="1">
    <location>
        <begin position="1594"/>
        <end position="1697"/>
    </location>
</feature>
<feature type="repeat" description="Spectrin 14" evidence="1">
    <location>
        <begin position="1701"/>
        <end position="1802"/>
    </location>
</feature>
<feature type="repeat" description="Spectrin 15" evidence="1">
    <location>
        <begin position="1807"/>
        <end position="1909"/>
    </location>
</feature>
<feature type="repeat" description="Spectrin 16" evidence="1">
    <location>
        <begin position="1913"/>
        <end position="2015"/>
    </location>
</feature>
<feature type="repeat" description="Spectrin 17" evidence="1">
    <location>
        <begin position="2020"/>
        <end position="2089"/>
    </location>
</feature>
<feature type="domain" description="PH" evidence="3">
    <location>
        <begin position="2147"/>
        <end position="2259"/>
    </location>
</feature>
<feature type="region of interest" description="Actin-binding">
    <location>
        <begin position="1"/>
        <end position="271"/>
    </location>
</feature>
<feature type="region of interest" description="Disordered" evidence="4">
    <location>
        <begin position="2097"/>
        <end position="2152"/>
    </location>
</feature>
<feature type="region of interest" description="Disordered" evidence="4">
    <location>
        <begin position="2262"/>
        <end position="2291"/>
    </location>
</feature>
<feature type="compositionally biased region" description="Basic and acidic residues" evidence="4">
    <location>
        <begin position="2097"/>
        <end position="2140"/>
    </location>
</feature>
<feature type="compositionally biased region" description="Polar residues" evidence="4">
    <location>
        <begin position="2262"/>
        <end position="2275"/>
    </location>
</feature>
<feature type="modified residue" description="Phosphoserine" evidence="5">
    <location>
        <position position="2195"/>
    </location>
</feature>
<feature type="sequence conflict" description="In Ref. 1; AAA28399." evidence="7" ref="1">
    <original>D</original>
    <variation>Y</variation>
    <location>
        <position position="2278"/>
    </location>
</feature>
<feature type="strand" evidence="8">
    <location>
        <begin position="2146"/>
        <end position="2157"/>
    </location>
</feature>
<feature type="strand" evidence="8">
    <location>
        <begin position="2173"/>
        <end position="2182"/>
    </location>
</feature>
<feature type="strand" evidence="8">
    <location>
        <begin position="2185"/>
        <end position="2191"/>
    </location>
</feature>
<feature type="helix" evidence="8">
    <location>
        <begin position="2192"/>
        <end position="2195"/>
    </location>
</feature>
<feature type="strand" evidence="8">
    <location>
        <begin position="2219"/>
        <end position="2223"/>
    </location>
</feature>
<feature type="strand" evidence="8">
    <location>
        <begin position="2226"/>
        <end position="2230"/>
    </location>
</feature>
<feature type="strand" evidence="8">
    <location>
        <begin position="2232"/>
        <end position="2234"/>
    </location>
</feature>
<feature type="strand" evidence="8">
    <location>
        <begin position="2236"/>
        <end position="2240"/>
    </location>
</feature>
<feature type="strand" evidence="8">
    <location>
        <begin position="2242"/>
        <end position="2244"/>
    </location>
</feature>
<feature type="helix" evidence="8">
    <location>
        <begin position="2245"/>
        <end position="2258"/>
    </location>
</feature>
<reference key="1">
    <citation type="journal article" date="1992" name="Proc. Natl. Acad. Sci. U.S.A.">
        <title>The complete sequence of Drosophila beta-spectrin reveals supra-motifs comprising eight 106-residue segments.</title>
        <authorList>
            <person name="Byers T.J."/>
            <person name="Brandin E."/>
            <person name="Lue R."/>
            <person name="Winograd E."/>
            <person name="Branton D."/>
        </authorList>
    </citation>
    <scope>NUCLEOTIDE SEQUENCE [MRNA]</scope>
</reference>
<reference key="2">
    <citation type="journal article" date="2000" name="Science">
        <title>The genome sequence of Drosophila melanogaster.</title>
        <authorList>
            <person name="Adams M.D."/>
            <person name="Celniker S.E."/>
            <person name="Holt R.A."/>
            <person name="Evans C.A."/>
            <person name="Gocayne J.D."/>
            <person name="Amanatides P.G."/>
            <person name="Scherer S.E."/>
            <person name="Li P.W."/>
            <person name="Hoskins R.A."/>
            <person name="Galle R.F."/>
            <person name="George R.A."/>
            <person name="Lewis S.E."/>
            <person name="Richards S."/>
            <person name="Ashburner M."/>
            <person name="Henderson S.N."/>
            <person name="Sutton G.G."/>
            <person name="Wortman J.R."/>
            <person name="Yandell M.D."/>
            <person name="Zhang Q."/>
            <person name="Chen L.X."/>
            <person name="Brandon R.C."/>
            <person name="Rogers Y.-H.C."/>
            <person name="Blazej R.G."/>
            <person name="Champe M."/>
            <person name="Pfeiffer B.D."/>
            <person name="Wan K.H."/>
            <person name="Doyle C."/>
            <person name="Baxter E.G."/>
            <person name="Helt G."/>
            <person name="Nelson C.R."/>
            <person name="Miklos G.L.G."/>
            <person name="Abril J.F."/>
            <person name="Agbayani A."/>
            <person name="An H.-J."/>
            <person name="Andrews-Pfannkoch C."/>
            <person name="Baldwin D."/>
            <person name="Ballew R.M."/>
            <person name="Basu A."/>
            <person name="Baxendale J."/>
            <person name="Bayraktaroglu L."/>
            <person name="Beasley E.M."/>
            <person name="Beeson K.Y."/>
            <person name="Benos P.V."/>
            <person name="Berman B.P."/>
            <person name="Bhandari D."/>
            <person name="Bolshakov S."/>
            <person name="Borkova D."/>
            <person name="Botchan M.R."/>
            <person name="Bouck J."/>
            <person name="Brokstein P."/>
            <person name="Brottier P."/>
            <person name="Burtis K.C."/>
            <person name="Busam D.A."/>
            <person name="Butler H."/>
            <person name="Cadieu E."/>
            <person name="Center A."/>
            <person name="Chandra I."/>
            <person name="Cherry J.M."/>
            <person name="Cawley S."/>
            <person name="Dahlke C."/>
            <person name="Davenport L.B."/>
            <person name="Davies P."/>
            <person name="de Pablos B."/>
            <person name="Delcher A."/>
            <person name="Deng Z."/>
            <person name="Mays A.D."/>
            <person name="Dew I."/>
            <person name="Dietz S.M."/>
            <person name="Dodson K."/>
            <person name="Doup L.E."/>
            <person name="Downes M."/>
            <person name="Dugan-Rocha S."/>
            <person name="Dunkov B.C."/>
            <person name="Dunn P."/>
            <person name="Durbin K.J."/>
            <person name="Evangelista C.C."/>
            <person name="Ferraz C."/>
            <person name="Ferriera S."/>
            <person name="Fleischmann W."/>
            <person name="Fosler C."/>
            <person name="Gabrielian A.E."/>
            <person name="Garg N.S."/>
            <person name="Gelbart W.M."/>
            <person name="Glasser K."/>
            <person name="Glodek A."/>
            <person name="Gong F."/>
            <person name="Gorrell J.H."/>
            <person name="Gu Z."/>
            <person name="Guan P."/>
            <person name="Harris M."/>
            <person name="Harris N.L."/>
            <person name="Harvey D.A."/>
            <person name="Heiman T.J."/>
            <person name="Hernandez J.R."/>
            <person name="Houck J."/>
            <person name="Hostin D."/>
            <person name="Houston K.A."/>
            <person name="Howland T.J."/>
            <person name="Wei M.-H."/>
            <person name="Ibegwam C."/>
            <person name="Jalali M."/>
            <person name="Kalush F."/>
            <person name="Karpen G.H."/>
            <person name="Ke Z."/>
            <person name="Kennison J.A."/>
            <person name="Ketchum K.A."/>
            <person name="Kimmel B.E."/>
            <person name="Kodira C.D."/>
            <person name="Kraft C.L."/>
            <person name="Kravitz S."/>
            <person name="Kulp D."/>
            <person name="Lai Z."/>
            <person name="Lasko P."/>
            <person name="Lei Y."/>
            <person name="Levitsky A.A."/>
            <person name="Li J.H."/>
            <person name="Li Z."/>
            <person name="Liang Y."/>
            <person name="Lin X."/>
            <person name="Liu X."/>
            <person name="Mattei B."/>
            <person name="McIntosh T.C."/>
            <person name="McLeod M.P."/>
            <person name="McPherson D."/>
            <person name="Merkulov G."/>
            <person name="Milshina N.V."/>
            <person name="Mobarry C."/>
            <person name="Morris J."/>
            <person name="Moshrefi A."/>
            <person name="Mount S.M."/>
            <person name="Moy M."/>
            <person name="Murphy B."/>
            <person name="Murphy L."/>
            <person name="Muzny D.M."/>
            <person name="Nelson D.L."/>
            <person name="Nelson D.R."/>
            <person name="Nelson K.A."/>
            <person name="Nixon K."/>
            <person name="Nusskern D.R."/>
            <person name="Pacleb J.M."/>
            <person name="Palazzolo M."/>
            <person name="Pittman G.S."/>
            <person name="Pan S."/>
            <person name="Pollard J."/>
            <person name="Puri V."/>
            <person name="Reese M.G."/>
            <person name="Reinert K."/>
            <person name="Remington K."/>
            <person name="Saunders R.D.C."/>
            <person name="Scheeler F."/>
            <person name="Shen H."/>
            <person name="Shue B.C."/>
            <person name="Siden-Kiamos I."/>
            <person name="Simpson M."/>
            <person name="Skupski M.P."/>
            <person name="Smith T.J."/>
            <person name="Spier E."/>
            <person name="Spradling A.C."/>
            <person name="Stapleton M."/>
            <person name="Strong R."/>
            <person name="Sun E."/>
            <person name="Svirskas R."/>
            <person name="Tector C."/>
            <person name="Turner R."/>
            <person name="Venter E."/>
            <person name="Wang A.H."/>
            <person name="Wang X."/>
            <person name="Wang Z.-Y."/>
            <person name="Wassarman D.A."/>
            <person name="Weinstock G.M."/>
            <person name="Weissenbach J."/>
            <person name="Williams S.M."/>
            <person name="Woodage T."/>
            <person name="Worley K.C."/>
            <person name="Wu D."/>
            <person name="Yang S."/>
            <person name="Yao Q.A."/>
            <person name="Ye J."/>
            <person name="Yeh R.-F."/>
            <person name="Zaveri J.S."/>
            <person name="Zhan M."/>
            <person name="Zhang G."/>
            <person name="Zhao Q."/>
            <person name="Zheng L."/>
            <person name="Zheng X.H."/>
            <person name="Zhong F.N."/>
            <person name="Zhong W."/>
            <person name="Zhou X."/>
            <person name="Zhu S.C."/>
            <person name="Zhu X."/>
            <person name="Smith H.O."/>
            <person name="Gibbs R.A."/>
            <person name="Myers E.W."/>
            <person name="Rubin G.M."/>
            <person name="Venter J.C."/>
        </authorList>
    </citation>
    <scope>NUCLEOTIDE SEQUENCE [LARGE SCALE GENOMIC DNA]</scope>
    <source>
        <strain>Berkeley</strain>
    </source>
</reference>
<reference key="3">
    <citation type="journal article" date="2002" name="Genome Biol.">
        <title>Annotation of the Drosophila melanogaster euchromatic genome: a systematic review.</title>
        <authorList>
            <person name="Misra S."/>
            <person name="Crosby M.A."/>
            <person name="Mungall C.J."/>
            <person name="Matthews B.B."/>
            <person name="Campbell K.S."/>
            <person name="Hradecky P."/>
            <person name="Huang Y."/>
            <person name="Kaminker J.S."/>
            <person name="Millburn G.H."/>
            <person name="Prochnik S.E."/>
            <person name="Smith C.D."/>
            <person name="Tupy J.L."/>
            <person name="Whitfield E.J."/>
            <person name="Bayraktaroglu L."/>
            <person name="Berman B.P."/>
            <person name="Bettencourt B.R."/>
            <person name="Celniker S.E."/>
            <person name="de Grey A.D.N.J."/>
            <person name="Drysdale R.A."/>
            <person name="Harris N.L."/>
            <person name="Richter J."/>
            <person name="Russo S."/>
            <person name="Schroeder A.J."/>
            <person name="Shu S.Q."/>
            <person name="Stapleton M."/>
            <person name="Yamada C."/>
            <person name="Ashburner M."/>
            <person name="Gelbart W.M."/>
            <person name="Rubin G.M."/>
            <person name="Lewis S.E."/>
        </authorList>
    </citation>
    <scope>GENOME REANNOTATION</scope>
    <source>
        <strain>Berkeley</strain>
    </source>
</reference>
<reference key="4">
    <citation type="submission" date="2003-12" db="EMBL/GenBank/DDBJ databases">
        <authorList>
            <person name="Stapleton M."/>
            <person name="Brokstein P."/>
            <person name="Hong L."/>
            <person name="Agbayani A."/>
            <person name="Carlson J.W."/>
            <person name="Champe M."/>
            <person name="Chavez C."/>
            <person name="Dorsett V."/>
            <person name="Dresnek D."/>
            <person name="Farfan D."/>
            <person name="Frise E."/>
            <person name="George R.A."/>
            <person name="Gonzalez M."/>
            <person name="Guarin H."/>
            <person name="Kronmiller B."/>
            <person name="Li P.W."/>
            <person name="Liao G."/>
            <person name="Miranda A."/>
            <person name="Mungall C.J."/>
            <person name="Nunoo J."/>
            <person name="Pacleb J.M."/>
            <person name="Paragas V."/>
            <person name="Park S."/>
            <person name="Patel S."/>
            <person name="Phouanenavong S."/>
            <person name="Wan K.H."/>
            <person name="Yu C."/>
            <person name="Lewis S.E."/>
            <person name="Rubin G.M."/>
            <person name="Celniker S.E."/>
        </authorList>
    </citation>
    <scope>NUCLEOTIDE SEQUENCE [LARGE SCALE MRNA] OF 1-1404</scope>
    <source>
        <strain>Berkeley</strain>
        <tissue>Testis</tissue>
    </source>
</reference>
<reference key="5">
    <citation type="journal article" date="1987" name="J. Cell Biol.">
        <title>Drosophilia spectrin. I. Characterization of the purified protein.</title>
        <authorList>
            <person name="Dubreuil R."/>
            <person name="Byers T.J."/>
            <person name="Branton D."/>
            <person name="Goldstein L.S.B."/>
            <person name="Kiehart D.P."/>
        </authorList>
    </citation>
    <scope>FUNCTION</scope>
</reference>
<reference key="6">
    <citation type="journal article" date="2008" name="J. Proteome Res.">
        <title>Phosphoproteome analysis of Drosophila melanogaster embryos.</title>
        <authorList>
            <person name="Zhai B."/>
            <person name="Villen J."/>
            <person name="Beausoleil S.A."/>
            <person name="Mintseris J."/>
            <person name="Gygi S.P."/>
        </authorList>
    </citation>
    <scope>PHOSPHORYLATION [LARGE SCALE ANALYSIS] AT SER-2195</scope>
    <scope>IDENTIFICATION BY MASS SPECTROMETRY</scope>
    <source>
        <tissue>Embryo</tissue>
    </source>
</reference>
<reference key="7">
    <citation type="journal article" date="1995" name="Structure">
        <title>Solution structure of the pleckstrin homology domain of Drosophila beta-spectrin.</title>
        <authorList>
            <person name="Zhang P."/>
            <person name="Talluri S."/>
            <person name="Deng H."/>
            <person name="Branton D."/>
            <person name="Wagner G."/>
        </authorList>
    </citation>
    <scope>STRUCTURE BY NMR OF 2145-2262</scope>
</reference>